<protein>
    <recommendedName>
        <fullName evidence="2">Folylpolyglutamate synthase</fullName>
        <ecNumber evidence="2">6.3.2.17</ecNumber>
    </recommendedName>
    <alternativeName>
        <fullName evidence="2">Folylpoly-gamma-glutamate synthetase</fullName>
        <shortName evidence="2">FPGS</shortName>
    </alternativeName>
    <alternativeName>
        <fullName evidence="2">Tetrahydrofolylpolyglutamate synthase</fullName>
        <shortName evidence="2">Tetrahydrofolate synthase</shortName>
    </alternativeName>
</protein>
<accession>E7Q9C7</accession>
<feature type="chain" id="PRO_0000414490" description="Folylpolyglutamate synthase">
    <location>
        <begin position="1"/>
        <end position="548"/>
    </location>
</feature>
<feature type="binding site" evidence="1">
    <location>
        <begin position="130"/>
        <end position="133"/>
    </location>
    <ligand>
        <name>ATP</name>
        <dbReference type="ChEBI" id="CHEBI:30616"/>
    </ligand>
</feature>
<feature type="binding site" evidence="1">
    <location>
        <position position="157"/>
    </location>
    <ligand>
        <name>Mg(2+)</name>
        <dbReference type="ChEBI" id="CHEBI:18420"/>
        <label>1</label>
    </ligand>
</feature>
<feature type="binding site" evidence="1">
    <location>
        <position position="234"/>
    </location>
    <ligand>
        <name>Mg(2+)</name>
        <dbReference type="ChEBI" id="CHEBI:18420"/>
        <label>1</label>
    </ligand>
</feature>
<feature type="binding site" evidence="1">
    <location>
        <position position="262"/>
    </location>
    <ligand>
        <name>Mg(2+)</name>
        <dbReference type="ChEBI" id="CHEBI:18420"/>
        <label>2</label>
    </ligand>
</feature>
<feature type="binding site" evidence="1">
    <location>
        <position position="382"/>
    </location>
    <ligand>
        <name>ATP</name>
        <dbReference type="ChEBI" id="CHEBI:30616"/>
    </ligand>
</feature>
<feature type="binding site" evidence="1">
    <location>
        <position position="396"/>
    </location>
    <ligand>
        <name>ATP</name>
        <dbReference type="ChEBI" id="CHEBI:30616"/>
    </ligand>
</feature>
<name>FOLE_YEASB</name>
<dbReference type="EC" id="6.3.2.17" evidence="2"/>
<dbReference type="EMBL" id="AEHH01000073">
    <property type="protein sequence ID" value="EGA56762.1"/>
    <property type="status" value="ALT_SEQ"/>
    <property type="molecule type" value="Genomic_DNA"/>
</dbReference>
<dbReference type="HOGENOM" id="CLU_015869_0_1_1"/>
<dbReference type="OrthoDB" id="5212574at2759"/>
<dbReference type="UniPathway" id="UPA00850"/>
<dbReference type="GO" id="GO:0005829">
    <property type="term" value="C:cytosol"/>
    <property type="evidence" value="ECO:0007669"/>
    <property type="project" value="TreeGrafter"/>
</dbReference>
<dbReference type="GO" id="GO:0005743">
    <property type="term" value="C:mitochondrial inner membrane"/>
    <property type="evidence" value="ECO:0007669"/>
    <property type="project" value="UniProtKB-SubCell"/>
</dbReference>
<dbReference type="GO" id="GO:0005759">
    <property type="term" value="C:mitochondrial matrix"/>
    <property type="evidence" value="ECO:0007669"/>
    <property type="project" value="UniProtKB-SubCell"/>
</dbReference>
<dbReference type="GO" id="GO:0005524">
    <property type="term" value="F:ATP binding"/>
    <property type="evidence" value="ECO:0007669"/>
    <property type="project" value="UniProtKB-KW"/>
</dbReference>
<dbReference type="GO" id="GO:0046872">
    <property type="term" value="F:metal ion binding"/>
    <property type="evidence" value="ECO:0007669"/>
    <property type="project" value="UniProtKB-KW"/>
</dbReference>
<dbReference type="GO" id="GO:0004326">
    <property type="term" value="F:tetrahydrofolylpolyglutamate synthase activity"/>
    <property type="evidence" value="ECO:0007669"/>
    <property type="project" value="UniProtKB-EC"/>
</dbReference>
<dbReference type="GO" id="GO:0006730">
    <property type="term" value="P:one-carbon metabolic process"/>
    <property type="evidence" value="ECO:0007669"/>
    <property type="project" value="UniProtKB-KW"/>
</dbReference>
<dbReference type="FunFam" id="3.40.1190.10:FF:000009">
    <property type="entry name" value="Folylpolyglutamate synthase"/>
    <property type="match status" value="1"/>
</dbReference>
<dbReference type="FunFam" id="3.90.190.20:FF:000009">
    <property type="entry name" value="Folylpolyglutamate synthase"/>
    <property type="match status" value="1"/>
</dbReference>
<dbReference type="Gene3D" id="3.90.190.20">
    <property type="entry name" value="Mur ligase, C-terminal domain"/>
    <property type="match status" value="1"/>
</dbReference>
<dbReference type="Gene3D" id="3.40.1190.10">
    <property type="entry name" value="Mur-like, catalytic domain"/>
    <property type="match status" value="1"/>
</dbReference>
<dbReference type="InterPro" id="IPR001645">
    <property type="entry name" value="Folylpolyglutamate_synth"/>
</dbReference>
<dbReference type="InterPro" id="IPR018109">
    <property type="entry name" value="Folylpolyglutamate_synth_CS"/>
</dbReference>
<dbReference type="InterPro" id="IPR023600">
    <property type="entry name" value="Folylpolyglutamate_synth_euk"/>
</dbReference>
<dbReference type="InterPro" id="IPR036565">
    <property type="entry name" value="Mur-like_cat_sf"/>
</dbReference>
<dbReference type="InterPro" id="IPR036615">
    <property type="entry name" value="Mur_ligase_C_dom_sf"/>
</dbReference>
<dbReference type="NCBIfam" id="TIGR01499">
    <property type="entry name" value="folC"/>
    <property type="match status" value="1"/>
</dbReference>
<dbReference type="PANTHER" id="PTHR11136:SF5">
    <property type="entry name" value="FOLYLPOLYGLUTAMATE SYNTHASE, MITOCHONDRIAL"/>
    <property type="match status" value="1"/>
</dbReference>
<dbReference type="PANTHER" id="PTHR11136">
    <property type="entry name" value="FOLYLPOLYGLUTAMATE SYNTHASE-RELATED"/>
    <property type="match status" value="1"/>
</dbReference>
<dbReference type="PIRSF" id="PIRSF038895">
    <property type="entry name" value="FPGS"/>
    <property type="match status" value="1"/>
</dbReference>
<dbReference type="SUPFAM" id="SSF53623">
    <property type="entry name" value="MurD-like peptide ligases, catalytic domain"/>
    <property type="match status" value="1"/>
</dbReference>
<dbReference type="SUPFAM" id="SSF53244">
    <property type="entry name" value="MurD-like peptide ligases, peptide-binding domain"/>
    <property type="match status" value="1"/>
</dbReference>
<dbReference type="PROSITE" id="PS01011">
    <property type="entry name" value="FOLYLPOLYGLU_SYNT_1"/>
    <property type="match status" value="1"/>
</dbReference>
<dbReference type="PROSITE" id="PS01012">
    <property type="entry name" value="FOLYLPOLYGLU_SYNT_2"/>
    <property type="match status" value="1"/>
</dbReference>
<gene>
    <name evidence="2" type="primary">MET7</name>
    <name type="ORF">FOSTERSB_4527</name>
</gene>
<organism>
    <name type="scientific">Saccharomyces cerevisiae (strain FostersB)</name>
    <name type="common">Baker's yeast</name>
    <dbReference type="NCBI Taxonomy" id="764102"/>
    <lineage>
        <taxon>Eukaryota</taxon>
        <taxon>Fungi</taxon>
        <taxon>Dikarya</taxon>
        <taxon>Ascomycota</taxon>
        <taxon>Saccharomycotina</taxon>
        <taxon>Saccharomycetes</taxon>
        <taxon>Saccharomycetales</taxon>
        <taxon>Saccharomycetaceae</taxon>
        <taxon>Saccharomyces</taxon>
    </lineage>
</organism>
<evidence type="ECO:0000250" key="1">
    <source>
        <dbReference type="UniProtKB" id="P08192"/>
    </source>
</evidence>
<evidence type="ECO:0000250" key="2">
    <source>
        <dbReference type="UniProtKB" id="Q08645"/>
    </source>
</evidence>
<evidence type="ECO:0000305" key="3"/>
<evidence type="ECO:0000312" key="4">
    <source>
        <dbReference type="EMBL" id="EGA56762.1"/>
    </source>
</evidence>
<sequence length="548" mass="62151">MHIGKKNYPNLITSFRMNLKKIILNHDRFSHPERWKTNALLRFTFVYIKFLFDLMIIKNPLRMVGKTYRDAVTALNSLQSNYANIMAIRQTGDRKNTMTLLEMHEWSRRIGYSASDFNKLNIVHITGTKGKGSTAAFTSSILGQYKEQLPRIGLYTSPHLKSVRERIRINGEPISEEKFAKYFFEVWDRLDSTTSSLDKFPHMIPGSKPGYFKFLTLLSFHTFIQEDCKSCVYEVGVGGELDSTNIIEKPIVCGVTLLGIDHTFMLGDTIEEIAWNKGGIFKSGAPAFTVEKQPPQGLTILKERAEERKTTLTEVPSFKQLENVKLGIAGEFQKSNASLAVMLASEILHTSNILEEKIKCSSNASIPEKFIIGLQNTKWEXRCQVLEKGKNVWYIDGAHTKDSMVAASTWFRDTVRLSKRKKILLFNQQSRDANALVNNLYSSVSPEITFDDVIFTTNVTWKSGSYSADLVSMNTSQEDVEKLKVQESLVKNWNKIDDNRAKTHVTASIEEANELIETLYDEPADIFVTGSLHLVGGLLVVFDRIDVK</sequence>
<comment type="function">
    <text evidence="2">Catalyzes conversion of folates to polyglutamate derivatives allowing concentration of folate compounds in the cell and the intracellular retention of these cofactors, which are important substrates for most of the folate-dependent enzymes that are involved in one-carbon transfer reactions involved in purine, pyrimidine and amino acid synthesis. Required for methionine synthesis and maintenance of intact mitochondrial DNA. Involved in telomere maintenance (By similarity).</text>
</comment>
<comment type="catalytic activity">
    <reaction evidence="2">
        <text>(6S)-5,6,7,8-tetrahydrofolyl-(gamma-L-Glu)(n) + L-glutamate + ATP = (6S)-5,6,7,8-tetrahydrofolyl-(gamma-L-Glu)(n+1) + ADP + phosphate + H(+)</text>
        <dbReference type="Rhea" id="RHEA:10580"/>
        <dbReference type="Rhea" id="RHEA-COMP:14738"/>
        <dbReference type="Rhea" id="RHEA-COMP:14740"/>
        <dbReference type="ChEBI" id="CHEBI:15378"/>
        <dbReference type="ChEBI" id="CHEBI:29985"/>
        <dbReference type="ChEBI" id="CHEBI:30616"/>
        <dbReference type="ChEBI" id="CHEBI:43474"/>
        <dbReference type="ChEBI" id="CHEBI:141005"/>
        <dbReference type="ChEBI" id="CHEBI:456216"/>
        <dbReference type="EC" id="6.3.2.17"/>
    </reaction>
</comment>
<comment type="cofactor">
    <cofactor evidence="2">
        <name>a monovalent cation</name>
        <dbReference type="ChEBI" id="CHEBI:60242"/>
    </cofactor>
    <text evidence="2">A monovalent cation.</text>
</comment>
<comment type="pathway">
    <text evidence="2">Cofactor biosynthesis; tetrahydrofolylpolyglutamate biosynthesis.</text>
</comment>
<comment type="subcellular location">
    <subcellularLocation>
        <location evidence="2">Mitochondrion inner membrane</location>
    </subcellularLocation>
    <subcellularLocation>
        <location evidence="2">Mitochondrion matrix</location>
    </subcellularLocation>
    <subcellularLocation>
        <location evidence="2">Cytoplasm</location>
    </subcellularLocation>
</comment>
<comment type="similarity">
    <text evidence="2">Belongs to the folylpolyglutamate synthase family.</text>
</comment>
<comment type="sequence caution" evidence="3">
    <conflict type="erroneous initiation">
        <sequence resource="EMBL-CDS" id="EGA56762"/>
    </conflict>
    <text>Truncated N-terminus.</text>
</comment>
<comment type="sequence caution" evidence="3">
    <conflict type="frameshift">
        <sequence resource="EMBL-CDS" id="EGA56762"/>
    </conflict>
</comment>
<keyword id="KW-0067">ATP-binding</keyword>
<keyword id="KW-0963">Cytoplasm</keyword>
<keyword id="KW-0436">Ligase</keyword>
<keyword id="KW-0460">Magnesium</keyword>
<keyword id="KW-0472">Membrane</keyword>
<keyword id="KW-0479">Metal-binding</keyword>
<keyword id="KW-0496">Mitochondrion</keyword>
<keyword id="KW-0999">Mitochondrion inner membrane</keyword>
<keyword id="KW-0547">Nucleotide-binding</keyword>
<keyword id="KW-0554">One-carbon metabolism</keyword>
<proteinExistence type="inferred from homology"/>
<reference evidence="4" key="1">
    <citation type="journal article" date="2011" name="PLoS Genet.">
        <title>Whole-genome comparison reveals novel genetic elements that characterize the genome of industrial strains of Saccharomyces cerevisiae.</title>
        <authorList>
            <person name="Borneman A.R."/>
            <person name="Desany B.A."/>
            <person name="Riches D."/>
            <person name="Affourtit J.P."/>
            <person name="Forgan A.H."/>
            <person name="Pretorius I.S."/>
            <person name="Egholm M."/>
            <person name="Chambers P.J."/>
        </authorList>
    </citation>
    <scope>NUCLEOTIDE SEQUENCE [LARGE SCALE GENOMIC DNA]</scope>
    <source>
        <strain>FostersB</strain>
    </source>
</reference>